<accession>P0AEP9</accession>
<accession>P52075</accession>
<accession>Q2M9L6</accession>
<protein>
    <recommendedName>
        <fullName evidence="9">Glycolate oxidase subunit GlcD</fullName>
        <ecNumber evidence="3 9">1.1.99.14</ecNumber>
    </recommendedName>
    <alternativeName>
        <fullName>Glycolate dehydrogenase subunit GlcD</fullName>
    </alternativeName>
</protein>
<evidence type="ECO:0000255" key="1">
    <source>
        <dbReference type="PROSITE-ProRule" id="PRU00718"/>
    </source>
</evidence>
<evidence type="ECO:0000269" key="2">
    <source>
    </source>
</evidence>
<evidence type="ECO:0000269" key="3">
    <source>
    </source>
</evidence>
<evidence type="ECO:0000269" key="4">
    <source>
    </source>
</evidence>
<evidence type="ECO:0000269" key="5">
    <source>
    </source>
</evidence>
<evidence type="ECO:0000303" key="6">
    <source>
    </source>
</evidence>
<evidence type="ECO:0000305" key="7"/>
<evidence type="ECO:0000305" key="8">
    <source>
    </source>
</evidence>
<evidence type="ECO:0000305" key="9">
    <source>
    </source>
</evidence>
<name>GLCD_ECOLI</name>
<feature type="chain" id="PRO_0000128181" description="Glycolate oxidase subunit GlcD">
    <location>
        <begin position="1"/>
        <end position="499"/>
    </location>
</feature>
<feature type="domain" description="FAD-binding PCMH-type" evidence="1">
    <location>
        <begin position="52"/>
        <end position="230"/>
    </location>
</feature>
<gene>
    <name evidence="6" type="primary">glcD</name>
    <name type="synonym">gox</name>
    <name type="synonym">yghM</name>
    <name type="ordered locus">b2979</name>
    <name type="ordered locus">JW2946</name>
</gene>
<organism>
    <name type="scientific">Escherichia coli (strain K12)</name>
    <dbReference type="NCBI Taxonomy" id="83333"/>
    <lineage>
        <taxon>Bacteria</taxon>
        <taxon>Pseudomonadati</taxon>
        <taxon>Pseudomonadota</taxon>
        <taxon>Gammaproteobacteria</taxon>
        <taxon>Enterobacterales</taxon>
        <taxon>Enterobacteriaceae</taxon>
        <taxon>Escherichia</taxon>
    </lineage>
</organism>
<dbReference type="EC" id="1.1.99.14" evidence="3 9"/>
<dbReference type="EMBL" id="L43490">
    <property type="protein sequence ID" value="AAB02530.1"/>
    <property type="molecule type" value="Genomic_DNA"/>
</dbReference>
<dbReference type="EMBL" id="U28377">
    <property type="protein sequence ID" value="AAA69146.1"/>
    <property type="molecule type" value="Genomic_DNA"/>
</dbReference>
<dbReference type="EMBL" id="U00096">
    <property type="protein sequence ID" value="AAC76015.1"/>
    <property type="molecule type" value="Genomic_DNA"/>
</dbReference>
<dbReference type="EMBL" id="AP009048">
    <property type="protein sequence ID" value="BAE77040.1"/>
    <property type="molecule type" value="Genomic_DNA"/>
</dbReference>
<dbReference type="PIR" id="A65084">
    <property type="entry name" value="A65084"/>
</dbReference>
<dbReference type="RefSeq" id="NP_417453.1">
    <property type="nucleotide sequence ID" value="NC_000913.3"/>
</dbReference>
<dbReference type="RefSeq" id="WP_000026117.1">
    <property type="nucleotide sequence ID" value="NZ_STEB01000001.1"/>
</dbReference>
<dbReference type="SMR" id="P0AEP9"/>
<dbReference type="BioGRID" id="4262368">
    <property type="interactions" value="17"/>
</dbReference>
<dbReference type="BioGRID" id="851676">
    <property type="interactions" value="2"/>
</dbReference>
<dbReference type="FunCoup" id="P0AEP9">
    <property type="interactions" value="700"/>
</dbReference>
<dbReference type="IntAct" id="P0AEP9">
    <property type="interactions" value="3"/>
</dbReference>
<dbReference type="STRING" id="511145.b2979"/>
<dbReference type="PaxDb" id="511145-b2979"/>
<dbReference type="EnsemblBacteria" id="AAC76015">
    <property type="protein sequence ID" value="AAC76015"/>
    <property type="gene ID" value="b2979"/>
</dbReference>
<dbReference type="GeneID" id="75205189"/>
<dbReference type="GeneID" id="947353"/>
<dbReference type="KEGG" id="ecj:JW2946"/>
<dbReference type="KEGG" id="eco:b2979"/>
<dbReference type="KEGG" id="ecoc:C3026_16300"/>
<dbReference type="PATRIC" id="fig|1411691.4.peg.3751"/>
<dbReference type="EchoBASE" id="EB2820"/>
<dbReference type="eggNOG" id="COG0277">
    <property type="taxonomic scope" value="Bacteria"/>
</dbReference>
<dbReference type="HOGENOM" id="CLU_017779_9_2_6"/>
<dbReference type="InParanoid" id="P0AEP9"/>
<dbReference type="OMA" id="TPRTCGE"/>
<dbReference type="OrthoDB" id="9811557at2"/>
<dbReference type="PhylomeDB" id="P0AEP9"/>
<dbReference type="BioCyc" id="EcoCyc:G7545-MONOMER"/>
<dbReference type="BioCyc" id="MetaCyc:G7545-MONOMER"/>
<dbReference type="PRO" id="PR:P0AEP9"/>
<dbReference type="Proteomes" id="UP000000625">
    <property type="component" value="Chromosome"/>
</dbReference>
<dbReference type="GO" id="GO:0009339">
    <property type="term" value="C:glycolate oxidase complex"/>
    <property type="evidence" value="ECO:0007669"/>
    <property type="project" value="InterPro"/>
</dbReference>
<dbReference type="GO" id="GO:0005886">
    <property type="term" value="C:plasma membrane"/>
    <property type="evidence" value="ECO:0007669"/>
    <property type="project" value="UniProtKB-SubCell"/>
</dbReference>
<dbReference type="GO" id="GO:0003973">
    <property type="term" value="F:(S)-2-hydroxy-acid oxidase activity"/>
    <property type="evidence" value="ECO:0007669"/>
    <property type="project" value="InterPro"/>
</dbReference>
<dbReference type="GO" id="GO:0047809">
    <property type="term" value="F:D-2-hydroxy-acid dehydrogenase activity"/>
    <property type="evidence" value="ECO:0007669"/>
    <property type="project" value="RHEA"/>
</dbReference>
<dbReference type="GO" id="GO:0071949">
    <property type="term" value="F:FAD binding"/>
    <property type="evidence" value="ECO:0007669"/>
    <property type="project" value="InterPro"/>
</dbReference>
<dbReference type="GO" id="GO:0019154">
    <property type="term" value="F:glycolate dehydrogenase activity"/>
    <property type="evidence" value="ECO:0000315"/>
    <property type="project" value="EcoCyc"/>
</dbReference>
<dbReference type="GO" id="GO:0006974">
    <property type="term" value="P:DNA damage response"/>
    <property type="evidence" value="ECO:0000270"/>
    <property type="project" value="EcoliWiki"/>
</dbReference>
<dbReference type="GO" id="GO:0046296">
    <property type="term" value="P:glycolate catabolic process"/>
    <property type="evidence" value="ECO:0000315"/>
    <property type="project" value="EcoCyc"/>
</dbReference>
<dbReference type="Gene3D" id="3.30.465.10">
    <property type="match status" value="1"/>
</dbReference>
<dbReference type="Gene3D" id="3.30.70.2190">
    <property type="match status" value="1"/>
</dbReference>
<dbReference type="Gene3D" id="3.30.70.2740">
    <property type="match status" value="1"/>
</dbReference>
<dbReference type="Gene3D" id="3.30.43.10">
    <property type="entry name" value="Uridine Diphospho-n-acetylenolpyruvylglucosamine Reductase, domain 2"/>
    <property type="match status" value="1"/>
</dbReference>
<dbReference type="Gene3D" id="1.10.45.10">
    <property type="entry name" value="Vanillyl-alcohol Oxidase, Chain A, domain 4"/>
    <property type="match status" value="1"/>
</dbReference>
<dbReference type="InterPro" id="IPR004113">
    <property type="entry name" value="FAD-bd_oxidored_4_C"/>
</dbReference>
<dbReference type="InterPro" id="IPR016166">
    <property type="entry name" value="FAD-bd_PCMH"/>
</dbReference>
<dbReference type="InterPro" id="IPR036318">
    <property type="entry name" value="FAD-bd_PCMH-like_sf"/>
</dbReference>
<dbReference type="InterPro" id="IPR016167">
    <property type="entry name" value="FAD-bd_PCMH_sub1"/>
</dbReference>
<dbReference type="InterPro" id="IPR016169">
    <property type="entry name" value="FAD-bd_PCMH_sub2"/>
</dbReference>
<dbReference type="InterPro" id="IPR016164">
    <property type="entry name" value="FAD-linked_Oxase-like_C"/>
</dbReference>
<dbReference type="InterPro" id="IPR051914">
    <property type="entry name" value="FAD-linked_OxidoTrans_Type4"/>
</dbReference>
<dbReference type="InterPro" id="IPR004490">
    <property type="entry name" value="GlcD"/>
</dbReference>
<dbReference type="InterPro" id="IPR006094">
    <property type="entry name" value="Oxid_FAD_bind_N"/>
</dbReference>
<dbReference type="InterPro" id="IPR016171">
    <property type="entry name" value="Vanillyl_alc_oxidase_C-sub2"/>
</dbReference>
<dbReference type="NCBIfam" id="TIGR00387">
    <property type="entry name" value="glcD"/>
    <property type="match status" value="1"/>
</dbReference>
<dbReference type="NCBIfam" id="NF008408">
    <property type="entry name" value="PRK11230.1"/>
    <property type="match status" value="1"/>
</dbReference>
<dbReference type="PANTHER" id="PTHR42934">
    <property type="entry name" value="GLYCOLATE OXIDASE SUBUNIT GLCD"/>
    <property type="match status" value="1"/>
</dbReference>
<dbReference type="PANTHER" id="PTHR42934:SF1">
    <property type="entry name" value="GLYCOLATE OXIDASE SUBUNIT GLCD"/>
    <property type="match status" value="1"/>
</dbReference>
<dbReference type="Pfam" id="PF02913">
    <property type="entry name" value="FAD-oxidase_C"/>
    <property type="match status" value="1"/>
</dbReference>
<dbReference type="Pfam" id="PF01565">
    <property type="entry name" value="FAD_binding_4"/>
    <property type="match status" value="1"/>
</dbReference>
<dbReference type="SUPFAM" id="SSF56176">
    <property type="entry name" value="FAD-binding/transporter-associated domain-like"/>
    <property type="match status" value="1"/>
</dbReference>
<dbReference type="SUPFAM" id="SSF55103">
    <property type="entry name" value="FAD-linked oxidases, C-terminal domain"/>
    <property type="match status" value="1"/>
</dbReference>
<dbReference type="PROSITE" id="PS51387">
    <property type="entry name" value="FAD_PCMH"/>
    <property type="match status" value="1"/>
</dbReference>
<keyword id="KW-0997">Cell inner membrane</keyword>
<keyword id="KW-1003">Cell membrane</keyword>
<keyword id="KW-0274">FAD</keyword>
<keyword id="KW-0285">Flavoprotein</keyword>
<keyword id="KW-0472">Membrane</keyword>
<keyword id="KW-0560">Oxidoreductase</keyword>
<keyword id="KW-1185">Reference proteome</keyword>
<proteinExistence type="evidence at protein level"/>
<comment type="function">
    <text evidence="3 4">Component of a complex that catalyzes the oxidation of glycolate to glyoxylate (PubMed:4557653, PubMed:8606183). Is required for E.coli to grow on glycolate as a sole source of carbon (PubMed:8606183). Is also able to oxidize D-lactate ((R)-lactate) with a similar rate (PubMed:4557653). Does not link directly to O(2), and 2,6-dichloroindophenol (DCIP) and phenazine methosulfate (PMS) can act as artificial electron acceptors in vitro, but the physiological molecule that functions as a primary electron acceptor during glycolate oxidation is unknown (PubMed:4557653).</text>
</comment>
<comment type="catalytic activity">
    <reaction evidence="3 9">
        <text>glycolate + A = glyoxylate + AH2</text>
        <dbReference type="Rhea" id="RHEA:21264"/>
        <dbReference type="ChEBI" id="CHEBI:13193"/>
        <dbReference type="ChEBI" id="CHEBI:17499"/>
        <dbReference type="ChEBI" id="CHEBI:29805"/>
        <dbReference type="ChEBI" id="CHEBI:36655"/>
        <dbReference type="EC" id="1.1.99.14"/>
    </reaction>
    <physiologicalReaction direction="left-to-right" evidence="4 8">
        <dbReference type="Rhea" id="RHEA:21265"/>
    </physiologicalReaction>
</comment>
<comment type="catalytic activity">
    <reaction evidence="3">
        <text>(R)-lactate + A = pyruvate + AH2</text>
        <dbReference type="Rhea" id="RHEA:15089"/>
        <dbReference type="ChEBI" id="CHEBI:13193"/>
        <dbReference type="ChEBI" id="CHEBI:15361"/>
        <dbReference type="ChEBI" id="CHEBI:16004"/>
        <dbReference type="ChEBI" id="CHEBI:17499"/>
    </reaction>
</comment>
<comment type="cofactor">
    <cofactor evidence="7">
        <name>FAD</name>
        <dbReference type="ChEBI" id="CHEBI:57692"/>
    </cofactor>
</comment>
<comment type="activity regulation">
    <text evidence="3">In vitro the glycolate oxidase activity is inhibited by the sulfhydryl inhibitors CuSO4 and PCMB, by KCN, but not by the metal complexing agent EDTA.</text>
</comment>
<comment type="biophysicochemical properties">
    <kinetics>
        <KM evidence="3">40 uM for glycolate</KM>
        <KM evidence="3">0.7 mM for D-lactate</KM>
        <text evidence="8">Parameters measured from a partially purified enzyme from extracts of glycolate grown cells.</text>
    </kinetics>
    <phDependence>
        <text evidence="3">Optimum pH is 8.0-8.8.</text>
    </phDependence>
</comment>
<comment type="subunit">
    <text evidence="4">The glycolate oxidase likely consists of three subunits, GlcD, GlcE and GlcF.</text>
</comment>
<comment type="subcellular location">
    <subcellularLocation>
        <location evidence="2">Cell inner membrane</location>
    </subcellularLocation>
    <text evidence="2">Glycolate oxidoreductase activity was shown to be firmly associated with the cytoplasmic membranes.</text>
</comment>
<comment type="induction">
    <text evidence="4 5">Induced in the presence of glycolate or glyoxylate (PubMed:8606183). Part of the glcDEFGB operon, which is induced by growth on glycolate, under the positive control of GlcC. Also induced by growth on acetate. Expression of the glc operon is strongly dependent on the integration host factor (IHF) and is repressed by the global respiratory regulator ArcA-P (PubMed:9880556).</text>
</comment>
<comment type="disruption phenotype">
    <text evidence="4">Abolishes glycolate oxidase activity. Is unable to grow on glycolate as the sole source of carbon, in contrast to wild type.</text>
</comment>
<comment type="similarity">
    <text evidence="7">Belongs to the FAD-binding oxidoreductase/transferase type 4 family.</text>
</comment>
<reference key="1">
    <citation type="journal article" date="1996" name="J. Bacteriol.">
        <title>glc locus of Escherichia coli: characterization of genes encoding the subunits of glycolate oxidase and the glc regulator protein.</title>
        <authorList>
            <person name="Pellicer M.T."/>
            <person name="Badia J."/>
            <person name="Aguilar J.T."/>
            <person name="Baldoma L."/>
        </authorList>
    </citation>
    <scope>NUCLEOTIDE SEQUENCE [GENOMIC DNA]</scope>
    <scope>FUNCTION</scope>
    <scope>DISRUPTION PHENOTYPE</scope>
    <scope>INDUCTION</scope>
    <scope>SUBUNIT</scope>
    <source>
        <strain>K12 / W3110 / ATCC 27325 / DSM 5911</strain>
    </source>
</reference>
<reference key="2">
    <citation type="journal article" date="1997" name="Science">
        <title>The complete genome sequence of Escherichia coli K-12.</title>
        <authorList>
            <person name="Blattner F.R."/>
            <person name="Plunkett G. III"/>
            <person name="Bloch C.A."/>
            <person name="Perna N.T."/>
            <person name="Burland V."/>
            <person name="Riley M."/>
            <person name="Collado-Vides J."/>
            <person name="Glasner J.D."/>
            <person name="Rode C.K."/>
            <person name="Mayhew G.F."/>
            <person name="Gregor J."/>
            <person name="Davis N.W."/>
            <person name="Kirkpatrick H.A."/>
            <person name="Goeden M.A."/>
            <person name="Rose D.J."/>
            <person name="Mau B."/>
            <person name="Shao Y."/>
        </authorList>
    </citation>
    <scope>NUCLEOTIDE SEQUENCE [LARGE SCALE GENOMIC DNA]</scope>
    <source>
        <strain>K12 / MG1655 / ATCC 47076</strain>
    </source>
</reference>
<reference key="3">
    <citation type="journal article" date="2006" name="Mol. Syst. Biol.">
        <title>Highly accurate genome sequences of Escherichia coli K-12 strains MG1655 and W3110.</title>
        <authorList>
            <person name="Hayashi K."/>
            <person name="Morooka N."/>
            <person name="Yamamoto Y."/>
            <person name="Fujita K."/>
            <person name="Isono K."/>
            <person name="Choi S."/>
            <person name="Ohtsubo E."/>
            <person name="Baba T."/>
            <person name="Wanner B.L."/>
            <person name="Mori H."/>
            <person name="Horiuchi T."/>
        </authorList>
    </citation>
    <scope>NUCLEOTIDE SEQUENCE [LARGE SCALE GENOMIC DNA]</scope>
    <source>
        <strain>K12 / W3110 / ATCC 27325 / DSM 5911</strain>
    </source>
</reference>
<reference key="4">
    <citation type="journal article" date="1972" name="Biochim. Biophys. Acta">
        <title>Glycolate oxidoreductase in Escherichia coli.</title>
        <authorList>
            <person name="Lord J.M."/>
        </authorList>
    </citation>
    <scope>FUNCTION</scope>
    <scope>CATALYTIC ACTIVITY</scope>
    <scope>BIOPHYSICOCHEMICAL PROPERTIES</scope>
    <scope>ACTIVITY REGULATION</scope>
    <source>
        <strain>K12</strain>
    </source>
</reference>
<reference key="5">
    <citation type="journal article" date="1989" name="FEBS Lett.">
        <title>The intracellular localization of glycolate oxidoreductase in Escherichia coli.</title>
        <authorList>
            <person name="Sallal A.K."/>
            <person name="Nimer N.A."/>
        </authorList>
    </citation>
    <scope>SUBCELLULAR LOCATION</scope>
    <source>
        <strain>ATCC 11775</strain>
    </source>
</reference>
<reference key="6">
    <citation type="journal article" date="1999" name="J. Biol. Chem.">
        <title>Cross-induction of glc and ace operons of Escherichia coli attributable to pathway intersection. Characterization of the glc promoter.</title>
        <authorList>
            <person name="Pellicer M.T."/>
            <person name="Fernandez C."/>
            <person name="Badia J."/>
            <person name="Aguilar J."/>
            <person name="Lin E.C."/>
            <person name="Baldom L."/>
        </authorList>
    </citation>
    <scope>INDUCTION</scope>
    <source>
        <strain>K12 / MC4100</strain>
    </source>
</reference>
<sequence length="499" mass="53812">MSILYEERLDGALPDVDRTSVLMALREHVPGLEILHTDEEIIPYECDGLSAYRTRPLLVVLPKQMEQVTAILAVCHRLRVPVVTRGAGTGLSGGALPLEKGVLLVMARFKEILDINPVGRRARVQPGVRNLAISQAVAPHNLYYAPDPSSQIACSIGGNVAENAGGVHCLKYGLTVHNLLKIEVQTLDGEALTLGSDALDSPGFDLLALFTGSEGMLGVTTEVTVKLLPKPPVARVLLASFDSVEKAGLAVGDIIANGIIPGGLEMMDNLSIRAAEDFIHAGYPVDAEAILLCELDGVESDVQEDCERVNDILLKAGATDVRLAQDEAERVRFWAGRKNAFPAVGRISPDYYCMDGTIPRRALPGVLEGIARLSQQYDLRVANVFHAGDGNMHPLILFDANEPGEFARAEELGGKILELCVEVGGSISGEHGIGREKINQMCAQFNSDEITTFHAVKAAFDPDGLLNPGKNIPTLHRCAEFGAMHVHHGHLPFPELERF</sequence>